<protein>
    <recommendedName>
        <fullName evidence="1">GTP 3',8-cyclase</fullName>
        <ecNumber evidence="1">4.1.99.22</ecNumber>
    </recommendedName>
    <alternativeName>
        <fullName evidence="1">Molybdenum cofactor biosynthesis protein A</fullName>
    </alternativeName>
</protein>
<gene>
    <name evidence="1" type="primary">moaA</name>
    <name type="ordered locus">BR0958</name>
    <name type="ordered locus">BS1330_I0954</name>
</gene>
<evidence type="ECO:0000255" key="1">
    <source>
        <dbReference type="HAMAP-Rule" id="MF_01225"/>
    </source>
</evidence>
<evidence type="ECO:0000255" key="2">
    <source>
        <dbReference type="PROSITE-ProRule" id="PRU01266"/>
    </source>
</evidence>
<reference key="1">
    <citation type="journal article" date="2002" name="Proc. Natl. Acad. Sci. U.S.A.">
        <title>The Brucella suis genome reveals fundamental similarities between animal and plant pathogens and symbionts.</title>
        <authorList>
            <person name="Paulsen I.T."/>
            <person name="Seshadri R."/>
            <person name="Nelson K.E."/>
            <person name="Eisen J.A."/>
            <person name="Heidelberg J.F."/>
            <person name="Read T.D."/>
            <person name="Dodson R.J."/>
            <person name="Umayam L.A."/>
            <person name="Brinkac L.M."/>
            <person name="Beanan M.J."/>
            <person name="Daugherty S.C."/>
            <person name="DeBoy R.T."/>
            <person name="Durkin A.S."/>
            <person name="Kolonay J.F."/>
            <person name="Madupu R."/>
            <person name="Nelson W.C."/>
            <person name="Ayodeji B."/>
            <person name="Kraul M."/>
            <person name="Shetty J."/>
            <person name="Malek J.A."/>
            <person name="Van Aken S.E."/>
            <person name="Riedmuller S."/>
            <person name="Tettelin H."/>
            <person name="Gill S.R."/>
            <person name="White O."/>
            <person name="Salzberg S.L."/>
            <person name="Hoover D.L."/>
            <person name="Lindler L.E."/>
            <person name="Halling S.M."/>
            <person name="Boyle S.M."/>
            <person name="Fraser C.M."/>
        </authorList>
    </citation>
    <scope>NUCLEOTIDE SEQUENCE [LARGE SCALE GENOMIC DNA]</scope>
    <source>
        <strain>1330</strain>
    </source>
</reference>
<reference key="2">
    <citation type="journal article" date="2011" name="J. Bacteriol.">
        <title>Revised genome sequence of Brucella suis 1330.</title>
        <authorList>
            <person name="Tae H."/>
            <person name="Shallom S."/>
            <person name="Settlage R."/>
            <person name="Preston D."/>
            <person name="Adams L.G."/>
            <person name="Garner H.R."/>
        </authorList>
    </citation>
    <scope>NUCLEOTIDE SEQUENCE [LARGE SCALE GENOMIC DNA]</scope>
    <source>
        <strain>1330</strain>
    </source>
</reference>
<organism>
    <name type="scientific">Brucella suis biovar 1 (strain 1330)</name>
    <dbReference type="NCBI Taxonomy" id="204722"/>
    <lineage>
        <taxon>Bacteria</taxon>
        <taxon>Pseudomonadati</taxon>
        <taxon>Pseudomonadota</taxon>
        <taxon>Alphaproteobacteria</taxon>
        <taxon>Hyphomicrobiales</taxon>
        <taxon>Brucellaceae</taxon>
        <taxon>Brucella/Ochrobactrum group</taxon>
        <taxon>Brucella</taxon>
    </lineage>
</organism>
<dbReference type="EC" id="4.1.99.22" evidence="1"/>
<dbReference type="EMBL" id="AE014291">
    <property type="protein sequence ID" value="AAN29883.1"/>
    <property type="molecule type" value="Genomic_DNA"/>
</dbReference>
<dbReference type="EMBL" id="CP002997">
    <property type="protein sequence ID" value="AEM18300.1"/>
    <property type="molecule type" value="Genomic_DNA"/>
</dbReference>
<dbReference type="RefSeq" id="WP_004689666.1">
    <property type="nucleotide sequence ID" value="NZ_KN046804.1"/>
</dbReference>
<dbReference type="SMR" id="Q8G0X4"/>
<dbReference type="GeneID" id="55590656"/>
<dbReference type="KEGG" id="bms:BR0958"/>
<dbReference type="KEGG" id="bsi:BS1330_I0954"/>
<dbReference type="PATRIC" id="fig|204722.22.peg.867"/>
<dbReference type="HOGENOM" id="CLU_009273_0_1_5"/>
<dbReference type="UniPathway" id="UPA00344"/>
<dbReference type="Proteomes" id="UP000007104">
    <property type="component" value="Chromosome I"/>
</dbReference>
<dbReference type="GO" id="GO:0051539">
    <property type="term" value="F:4 iron, 4 sulfur cluster binding"/>
    <property type="evidence" value="ECO:0007669"/>
    <property type="project" value="UniProtKB-UniRule"/>
</dbReference>
<dbReference type="GO" id="GO:0061799">
    <property type="term" value="F:cyclic pyranopterin monophosphate synthase activity"/>
    <property type="evidence" value="ECO:0007669"/>
    <property type="project" value="TreeGrafter"/>
</dbReference>
<dbReference type="GO" id="GO:0061798">
    <property type="term" value="F:GTP 3',8'-cyclase activity"/>
    <property type="evidence" value="ECO:0007669"/>
    <property type="project" value="UniProtKB-UniRule"/>
</dbReference>
<dbReference type="GO" id="GO:0005525">
    <property type="term" value="F:GTP binding"/>
    <property type="evidence" value="ECO:0007669"/>
    <property type="project" value="UniProtKB-UniRule"/>
</dbReference>
<dbReference type="GO" id="GO:0046872">
    <property type="term" value="F:metal ion binding"/>
    <property type="evidence" value="ECO:0007669"/>
    <property type="project" value="UniProtKB-KW"/>
</dbReference>
<dbReference type="GO" id="GO:1904047">
    <property type="term" value="F:S-adenosyl-L-methionine binding"/>
    <property type="evidence" value="ECO:0007669"/>
    <property type="project" value="UniProtKB-UniRule"/>
</dbReference>
<dbReference type="GO" id="GO:0006777">
    <property type="term" value="P:Mo-molybdopterin cofactor biosynthetic process"/>
    <property type="evidence" value="ECO:0007669"/>
    <property type="project" value="UniProtKB-UniRule"/>
</dbReference>
<dbReference type="CDD" id="cd01335">
    <property type="entry name" value="Radical_SAM"/>
    <property type="match status" value="1"/>
</dbReference>
<dbReference type="CDD" id="cd21117">
    <property type="entry name" value="Twitch_MoaA"/>
    <property type="match status" value="1"/>
</dbReference>
<dbReference type="Gene3D" id="3.20.20.70">
    <property type="entry name" value="Aldolase class I"/>
    <property type="match status" value="1"/>
</dbReference>
<dbReference type="HAMAP" id="MF_01225_B">
    <property type="entry name" value="MoaA_B"/>
    <property type="match status" value="1"/>
</dbReference>
<dbReference type="InterPro" id="IPR013785">
    <property type="entry name" value="Aldolase_TIM"/>
</dbReference>
<dbReference type="InterPro" id="IPR006638">
    <property type="entry name" value="Elp3/MiaA/NifB-like_rSAM"/>
</dbReference>
<dbReference type="InterPro" id="IPR013483">
    <property type="entry name" value="MoaA"/>
</dbReference>
<dbReference type="InterPro" id="IPR000385">
    <property type="entry name" value="MoaA_NifB_PqqE_Fe-S-bd_CS"/>
</dbReference>
<dbReference type="InterPro" id="IPR010505">
    <property type="entry name" value="MoaA_twitch"/>
</dbReference>
<dbReference type="InterPro" id="IPR050105">
    <property type="entry name" value="MoCo_biosynth_MoaA/MoaC"/>
</dbReference>
<dbReference type="InterPro" id="IPR007197">
    <property type="entry name" value="rSAM"/>
</dbReference>
<dbReference type="NCBIfam" id="TIGR02666">
    <property type="entry name" value="moaA"/>
    <property type="match status" value="1"/>
</dbReference>
<dbReference type="PANTHER" id="PTHR22960:SF0">
    <property type="entry name" value="MOLYBDENUM COFACTOR BIOSYNTHESIS PROTEIN 1"/>
    <property type="match status" value="1"/>
</dbReference>
<dbReference type="PANTHER" id="PTHR22960">
    <property type="entry name" value="MOLYBDOPTERIN COFACTOR SYNTHESIS PROTEIN A"/>
    <property type="match status" value="1"/>
</dbReference>
<dbReference type="Pfam" id="PF13353">
    <property type="entry name" value="Fer4_12"/>
    <property type="match status" value="1"/>
</dbReference>
<dbReference type="Pfam" id="PF06463">
    <property type="entry name" value="Mob_synth_C"/>
    <property type="match status" value="1"/>
</dbReference>
<dbReference type="Pfam" id="PF04055">
    <property type="entry name" value="Radical_SAM"/>
    <property type="match status" value="1"/>
</dbReference>
<dbReference type="SFLD" id="SFLDG01383">
    <property type="entry name" value="cyclic_pyranopterin_phosphate"/>
    <property type="match status" value="1"/>
</dbReference>
<dbReference type="SFLD" id="SFLDG01386">
    <property type="entry name" value="main_SPASM_domain-containing"/>
    <property type="match status" value="1"/>
</dbReference>
<dbReference type="SMART" id="SM00729">
    <property type="entry name" value="Elp3"/>
    <property type="match status" value="1"/>
</dbReference>
<dbReference type="SUPFAM" id="SSF102114">
    <property type="entry name" value="Radical SAM enzymes"/>
    <property type="match status" value="1"/>
</dbReference>
<dbReference type="PROSITE" id="PS01305">
    <property type="entry name" value="MOAA_NIFB_PQQE"/>
    <property type="match status" value="1"/>
</dbReference>
<dbReference type="PROSITE" id="PS51918">
    <property type="entry name" value="RADICAL_SAM"/>
    <property type="match status" value="1"/>
</dbReference>
<feature type="chain" id="PRO_0000152951" description="GTP 3',8-cyclase">
    <location>
        <begin position="1"/>
        <end position="344"/>
    </location>
</feature>
<feature type="domain" description="Radical SAM core" evidence="2">
    <location>
        <begin position="19"/>
        <end position="245"/>
    </location>
</feature>
<feature type="binding site" evidence="1">
    <location>
        <position position="28"/>
    </location>
    <ligand>
        <name>GTP</name>
        <dbReference type="ChEBI" id="CHEBI:37565"/>
    </ligand>
</feature>
<feature type="binding site" evidence="1">
    <location>
        <position position="35"/>
    </location>
    <ligand>
        <name>[4Fe-4S] cluster</name>
        <dbReference type="ChEBI" id="CHEBI:49883"/>
        <label>1</label>
        <note>4Fe-4S-S-AdoMet</note>
    </ligand>
</feature>
<feature type="binding site" evidence="1">
    <location>
        <position position="39"/>
    </location>
    <ligand>
        <name>[4Fe-4S] cluster</name>
        <dbReference type="ChEBI" id="CHEBI:49883"/>
        <label>1</label>
        <note>4Fe-4S-S-AdoMet</note>
    </ligand>
</feature>
<feature type="binding site" evidence="1">
    <location>
        <position position="41"/>
    </location>
    <ligand>
        <name>S-adenosyl-L-methionine</name>
        <dbReference type="ChEBI" id="CHEBI:59789"/>
    </ligand>
</feature>
<feature type="binding site" evidence="1">
    <location>
        <position position="42"/>
    </location>
    <ligand>
        <name>[4Fe-4S] cluster</name>
        <dbReference type="ChEBI" id="CHEBI:49883"/>
        <label>1</label>
        <note>4Fe-4S-S-AdoMet</note>
    </ligand>
</feature>
<feature type="binding site" evidence="1">
    <location>
        <position position="77"/>
    </location>
    <ligand>
        <name>GTP</name>
        <dbReference type="ChEBI" id="CHEBI:37565"/>
    </ligand>
</feature>
<feature type="binding site" evidence="1">
    <location>
        <position position="81"/>
    </location>
    <ligand>
        <name>S-adenosyl-L-methionine</name>
        <dbReference type="ChEBI" id="CHEBI:59789"/>
    </ligand>
</feature>
<feature type="binding site" evidence="1">
    <location>
        <position position="111"/>
    </location>
    <ligand>
        <name>GTP</name>
        <dbReference type="ChEBI" id="CHEBI:37565"/>
    </ligand>
</feature>
<feature type="binding site" evidence="1">
    <location>
        <position position="135"/>
    </location>
    <ligand>
        <name>S-adenosyl-L-methionine</name>
        <dbReference type="ChEBI" id="CHEBI:59789"/>
    </ligand>
</feature>
<feature type="binding site" evidence="1">
    <location>
        <position position="171"/>
    </location>
    <ligand>
        <name>GTP</name>
        <dbReference type="ChEBI" id="CHEBI:37565"/>
    </ligand>
</feature>
<feature type="binding site" evidence="1">
    <location>
        <position position="205"/>
    </location>
    <ligand>
        <name>S-adenosyl-L-methionine</name>
        <dbReference type="ChEBI" id="CHEBI:59789"/>
    </ligand>
</feature>
<feature type="binding site" evidence="1">
    <location>
        <position position="268"/>
    </location>
    <ligand>
        <name>[4Fe-4S] cluster</name>
        <dbReference type="ChEBI" id="CHEBI:49883"/>
        <label>2</label>
        <note>4Fe-4S-substrate</note>
    </ligand>
</feature>
<feature type="binding site" evidence="1">
    <location>
        <position position="271"/>
    </location>
    <ligand>
        <name>[4Fe-4S] cluster</name>
        <dbReference type="ChEBI" id="CHEBI:49883"/>
        <label>2</label>
        <note>4Fe-4S-substrate</note>
    </ligand>
</feature>
<feature type="binding site" evidence="1">
    <location>
        <begin position="273"/>
        <end position="275"/>
    </location>
    <ligand>
        <name>GTP</name>
        <dbReference type="ChEBI" id="CHEBI:37565"/>
    </ligand>
</feature>
<feature type="binding site" evidence="1">
    <location>
        <position position="285"/>
    </location>
    <ligand>
        <name>[4Fe-4S] cluster</name>
        <dbReference type="ChEBI" id="CHEBI:49883"/>
        <label>2</label>
        <note>4Fe-4S-substrate</note>
    </ligand>
</feature>
<sequence length="344" mass="38603">MRNVQAQPLVSPTEPMIDPFGRAVTYLRVSVTDRCDFRCTYCMAEHMTFLPKKDLLTLEELDRLCSVFIEKGVRKLRLTGGEPLVRKNIMHLIGNLSRHLKSGALDELTLTTNGSQLARFAGELADCGVRRINVSLDTLNPEKFRTITRWGDLSRVLEGIDAAQKAGIHVKINAVALKDFNDAEIPELIRWAHGRGMDVTLIETMPMGEIEFDRTDQYLPLSQVRADLASQFTLADIPYRTGGPARYVTISETGGRLGFITPMTHNFCESCNRVRLTCTGMLYMCLGQNDDADLRKALRESESDEHLSQAIDEAISRKPKGHDFIIDREHNRPSVARHMSLTGG</sequence>
<comment type="function">
    <text evidence="1">Catalyzes the cyclization of GTP to (8S)-3',8-cyclo-7,8-dihydroguanosine 5'-triphosphate.</text>
</comment>
<comment type="catalytic activity">
    <reaction evidence="1">
        <text>GTP + AH2 + S-adenosyl-L-methionine = (8S)-3',8-cyclo-7,8-dihydroguanosine 5'-triphosphate + 5'-deoxyadenosine + L-methionine + A + H(+)</text>
        <dbReference type="Rhea" id="RHEA:49576"/>
        <dbReference type="ChEBI" id="CHEBI:13193"/>
        <dbReference type="ChEBI" id="CHEBI:15378"/>
        <dbReference type="ChEBI" id="CHEBI:17319"/>
        <dbReference type="ChEBI" id="CHEBI:17499"/>
        <dbReference type="ChEBI" id="CHEBI:37565"/>
        <dbReference type="ChEBI" id="CHEBI:57844"/>
        <dbReference type="ChEBI" id="CHEBI:59789"/>
        <dbReference type="ChEBI" id="CHEBI:131766"/>
        <dbReference type="EC" id="4.1.99.22"/>
    </reaction>
</comment>
<comment type="cofactor">
    <cofactor evidence="1">
        <name>[4Fe-4S] cluster</name>
        <dbReference type="ChEBI" id="CHEBI:49883"/>
    </cofactor>
    <text evidence="1">Binds 2 [4Fe-4S] clusters. Binds 1 [4Fe-4S] cluster coordinated with 3 cysteines and an exchangeable S-adenosyl-L-methionine and 1 [4Fe-4S] cluster coordinated with 3 cysteines and the GTP-derived substrate.</text>
</comment>
<comment type="pathway">
    <text evidence="1">Cofactor biosynthesis; molybdopterin biosynthesis.</text>
</comment>
<comment type="subunit">
    <text evidence="1">Monomer and homodimer.</text>
</comment>
<comment type="similarity">
    <text evidence="1">Belongs to the radical SAM superfamily. MoaA family.</text>
</comment>
<accession>Q8G0X4</accession>
<accession>G0K9N4</accession>
<proteinExistence type="inferred from homology"/>
<keyword id="KW-0004">4Fe-4S</keyword>
<keyword id="KW-0342">GTP-binding</keyword>
<keyword id="KW-0408">Iron</keyword>
<keyword id="KW-0411">Iron-sulfur</keyword>
<keyword id="KW-0456">Lyase</keyword>
<keyword id="KW-0479">Metal-binding</keyword>
<keyword id="KW-0501">Molybdenum cofactor biosynthesis</keyword>
<keyword id="KW-0547">Nucleotide-binding</keyword>
<keyword id="KW-0949">S-adenosyl-L-methionine</keyword>
<name>MOAA_BRUSU</name>